<evidence type="ECO:0000255" key="1">
    <source>
        <dbReference type="HAMAP-Rule" id="MF_01518"/>
    </source>
</evidence>
<reference key="1">
    <citation type="journal article" date="2004" name="J. Mol. Microbiol. Biotechnol.">
        <title>The complete genome sequence of Bacillus licheniformis DSM13, an organism with great industrial potential.</title>
        <authorList>
            <person name="Veith B."/>
            <person name="Herzberg C."/>
            <person name="Steckel S."/>
            <person name="Feesche J."/>
            <person name="Maurer K.H."/>
            <person name="Ehrenreich P."/>
            <person name="Baeumer S."/>
            <person name="Henne A."/>
            <person name="Liesegang H."/>
            <person name="Merkl R."/>
            <person name="Ehrenreich A."/>
            <person name="Gottschalk G."/>
        </authorList>
    </citation>
    <scope>NUCLEOTIDE SEQUENCE [LARGE SCALE GENOMIC DNA]</scope>
    <source>
        <strain>ATCC 14580 / DSM 13 / JCM 2505 / CCUG 7422 / NBRC 12200 / NCIMB 9375 / NCTC 10341 / NRRL NRS-1264 / Gibson 46</strain>
    </source>
</reference>
<reference key="2">
    <citation type="journal article" date="2004" name="Genome Biol.">
        <title>Complete genome sequence of the industrial bacterium Bacillus licheniformis and comparisons with closely related Bacillus species.</title>
        <authorList>
            <person name="Rey M.W."/>
            <person name="Ramaiya P."/>
            <person name="Nelson B.A."/>
            <person name="Brody-Karpin S.D."/>
            <person name="Zaretsky E.J."/>
            <person name="Tang M."/>
            <person name="Lopez de Leon A."/>
            <person name="Xiang H."/>
            <person name="Gusti V."/>
            <person name="Clausen I.G."/>
            <person name="Olsen P.B."/>
            <person name="Rasmussen M.D."/>
            <person name="Andersen J.T."/>
            <person name="Joergensen P.L."/>
            <person name="Larsen T.S."/>
            <person name="Sorokin A."/>
            <person name="Bolotin A."/>
            <person name="Lapidus A."/>
            <person name="Galleron N."/>
            <person name="Ehrlich S.D."/>
            <person name="Berka R.M."/>
        </authorList>
    </citation>
    <scope>NUCLEOTIDE SEQUENCE [LARGE SCALE GENOMIC DNA]</scope>
    <source>
        <strain>ATCC 14580 / DSM 13 / JCM 2505 / CCUG 7422 / NBRC 12200 / NCIMB 9375 / NCTC 10341 / NRRL NRS-1264 / Gibson 46</strain>
    </source>
</reference>
<keyword id="KW-0378">Hydrolase</keyword>
<keyword id="KW-0464">Manganese</keyword>
<keyword id="KW-1185">Reference proteome</keyword>
<protein>
    <recommendedName>
        <fullName evidence="1">Adenine deaminase</fullName>
        <shortName evidence="1">Adenase</shortName>
        <shortName evidence="1">Adenine aminase</shortName>
        <ecNumber evidence="1">3.5.4.2</ecNumber>
    </recommendedName>
</protein>
<name>ADEC_BACLD</name>
<accession>Q65K51</accession>
<gene>
    <name evidence="1" type="primary">ade</name>
    <name type="synonym">adeC</name>
    <name type="ordered locus">BLi01667</name>
    <name type="ordered locus">BL01613</name>
</gene>
<organism>
    <name type="scientific">Bacillus licheniformis (strain ATCC 14580 / DSM 13 / JCM 2505 / CCUG 7422 / NBRC 12200 / NCIMB 9375 / NCTC 10341 / NRRL NRS-1264 / Gibson 46)</name>
    <dbReference type="NCBI Taxonomy" id="279010"/>
    <lineage>
        <taxon>Bacteria</taxon>
        <taxon>Bacillati</taxon>
        <taxon>Bacillota</taxon>
        <taxon>Bacilli</taxon>
        <taxon>Bacillales</taxon>
        <taxon>Bacillaceae</taxon>
        <taxon>Bacillus</taxon>
    </lineage>
</organism>
<dbReference type="EC" id="3.5.4.2" evidence="1"/>
<dbReference type="EMBL" id="AE017333">
    <property type="protein sequence ID" value="AAU40563.1"/>
    <property type="molecule type" value="Genomic_DNA"/>
</dbReference>
<dbReference type="EMBL" id="CP000002">
    <property type="protein sequence ID" value="AAU23205.1"/>
    <property type="molecule type" value="Genomic_DNA"/>
</dbReference>
<dbReference type="RefSeq" id="WP_011197948.1">
    <property type="nucleotide sequence ID" value="NC_006322.1"/>
</dbReference>
<dbReference type="SMR" id="Q65K51"/>
<dbReference type="STRING" id="279010.BL01613"/>
<dbReference type="GeneID" id="92861739"/>
<dbReference type="KEGG" id="bld:BLi01667"/>
<dbReference type="KEGG" id="bli:BL01613"/>
<dbReference type="PATRIC" id="fig|279010.13.peg.1664"/>
<dbReference type="eggNOG" id="COG1001">
    <property type="taxonomic scope" value="Bacteria"/>
</dbReference>
<dbReference type="HOGENOM" id="CLU_027935_0_0_9"/>
<dbReference type="Proteomes" id="UP000000606">
    <property type="component" value="Chromosome"/>
</dbReference>
<dbReference type="GO" id="GO:0000034">
    <property type="term" value="F:adenine deaminase activity"/>
    <property type="evidence" value="ECO:0007669"/>
    <property type="project" value="UniProtKB-UniRule"/>
</dbReference>
<dbReference type="GO" id="GO:0006146">
    <property type="term" value="P:adenine catabolic process"/>
    <property type="evidence" value="ECO:0007669"/>
    <property type="project" value="InterPro"/>
</dbReference>
<dbReference type="CDD" id="cd01295">
    <property type="entry name" value="AdeC"/>
    <property type="match status" value="1"/>
</dbReference>
<dbReference type="FunFam" id="2.30.40.10:FF:000059">
    <property type="entry name" value="Adenine deaminase"/>
    <property type="match status" value="1"/>
</dbReference>
<dbReference type="FunFam" id="3.20.20.140:FF:000016">
    <property type="entry name" value="Adenine deaminase"/>
    <property type="match status" value="1"/>
</dbReference>
<dbReference type="Gene3D" id="3.20.20.140">
    <property type="entry name" value="Metal-dependent hydrolases"/>
    <property type="match status" value="1"/>
</dbReference>
<dbReference type="Gene3D" id="2.30.40.10">
    <property type="entry name" value="Urease, subunit C, domain 1"/>
    <property type="match status" value="1"/>
</dbReference>
<dbReference type="HAMAP" id="MF_01518">
    <property type="entry name" value="Adenine_deamin"/>
    <property type="match status" value="1"/>
</dbReference>
<dbReference type="InterPro" id="IPR006679">
    <property type="entry name" value="Adenine_deam"/>
</dbReference>
<dbReference type="InterPro" id="IPR026912">
    <property type="entry name" value="Adenine_deam_C"/>
</dbReference>
<dbReference type="InterPro" id="IPR006680">
    <property type="entry name" value="Amidohydro-rel"/>
</dbReference>
<dbReference type="InterPro" id="IPR011059">
    <property type="entry name" value="Metal-dep_hydrolase_composite"/>
</dbReference>
<dbReference type="InterPro" id="IPR032466">
    <property type="entry name" value="Metal_Hydrolase"/>
</dbReference>
<dbReference type="NCBIfam" id="TIGR01178">
    <property type="entry name" value="ade"/>
    <property type="match status" value="1"/>
</dbReference>
<dbReference type="PANTHER" id="PTHR11113:SF2">
    <property type="entry name" value="ADENINE DEAMINASE"/>
    <property type="match status" value="1"/>
</dbReference>
<dbReference type="PANTHER" id="PTHR11113">
    <property type="entry name" value="N-ACETYLGLUCOSAMINE-6-PHOSPHATE DEACETYLASE"/>
    <property type="match status" value="1"/>
</dbReference>
<dbReference type="Pfam" id="PF13382">
    <property type="entry name" value="Adenine_deam_C"/>
    <property type="match status" value="1"/>
</dbReference>
<dbReference type="Pfam" id="PF01979">
    <property type="entry name" value="Amidohydro_1"/>
    <property type="match status" value="1"/>
</dbReference>
<dbReference type="SUPFAM" id="SSF51338">
    <property type="entry name" value="Composite domain of metallo-dependent hydrolases"/>
    <property type="match status" value="1"/>
</dbReference>
<dbReference type="SUPFAM" id="SSF51556">
    <property type="entry name" value="Metallo-dependent hydrolases"/>
    <property type="match status" value="1"/>
</dbReference>
<proteinExistence type="inferred from homology"/>
<comment type="catalytic activity">
    <reaction evidence="1">
        <text>adenine + H2O + H(+) = hypoxanthine + NH4(+)</text>
        <dbReference type="Rhea" id="RHEA:23688"/>
        <dbReference type="ChEBI" id="CHEBI:15377"/>
        <dbReference type="ChEBI" id="CHEBI:15378"/>
        <dbReference type="ChEBI" id="CHEBI:16708"/>
        <dbReference type="ChEBI" id="CHEBI:17368"/>
        <dbReference type="ChEBI" id="CHEBI:28938"/>
        <dbReference type="EC" id="3.5.4.2"/>
    </reaction>
</comment>
<comment type="cofactor">
    <cofactor evidence="1">
        <name>Mn(2+)</name>
        <dbReference type="ChEBI" id="CHEBI:29035"/>
    </cofactor>
</comment>
<comment type="similarity">
    <text evidence="1">Belongs to the metallo-dependent hydrolases superfamily. Adenine deaminase family.</text>
</comment>
<feature type="chain" id="PRO_0000142401" description="Adenine deaminase">
    <location>
        <begin position="1"/>
        <end position="573"/>
    </location>
</feature>
<sequence length="573" mass="62082">MDKEMFIRRLGAASHRKKAETVIKNGKIMDVFNQEWLETDIAITDGAIVGLGEYEGGNIIDAEGQMIVPGFIDGHVHIESSMVTPPEFAKAVIPHGVTTVVTDPHEIANVSGVKGLEFMLEQAEMTRLNIYFMLPSCVPAAPFEKSGAILNAADLHPFYSREEVLGLAEVMDYVAVEAGEPDMVQKLIDADKAGKRIDGHLAGLSAGFVNVYRAAGVLTDHEVTTPEEALERVRRGMYVMLREGSAAKNTRHVLPAVNEKNVRRFFFCTDDKHLDELVDEGSINYQVKLAIQEGLDPFLAYQMGSLNAAECFGLKTKGAVAPGYDADLLFISDFENVSITKTMINGVIWSGTEQSQSTGGKAASGLLQSVHLSDLHENDLQIPIVQENEIRVIDIIPNQLETKLSLAKPKSGAFFQPDLESDLLKIAVVERHRGVKEIGLGVVRGFGLKEGAIATTISHDSHNLIAVGTNDQDILKAIERLGEIGGGLTIAKGGKELQSVALPIAGLLSDKPLETVNESLKSLHAAITETGFSGAFNPFLTLSFLALPVIPDIKMTTEGLFDVKAFRHIPVQP</sequence>